<gene>
    <name type="primary">NTF2</name>
    <name type="ordered locus">YER009W</name>
</gene>
<comment type="function">
    <text evidence="3">Facilitates protein transport into the nucleus. Interacts with various nucleoporins and with Ran-GDP. Could be part of a multicomponent system of cytosolic factors that assemble at the pore complex during nuclear import. In vitro, the NTF2-Ran-GDP association, in the presence of GTP, triggers dissociation of the karyopherin alpha-beta complex, allowing nuclear translocation of karyopherin alpha and the NLS substrate.</text>
</comment>
<comment type="subcellular location">
    <subcellularLocation>
        <location evidence="2">Cytoplasm</location>
    </subcellularLocation>
</comment>
<sequence>MSLDFNTLAQNFTQFYYNQFDTDRSQLGNLYRNESMLTFETSQLQGAKDIVEKLVSLPFQKVQHRITTLDAQPASPNGDVLVMITGDLLIDEEQNPQRFSQVFHLIPDGNSYYVFNDIFRLNYSA</sequence>
<protein>
    <recommendedName>
        <fullName>Nuclear transport factor 2</fullName>
        <shortName>NTF-2</shortName>
    </recommendedName>
    <alternativeName>
        <fullName>Nuclear transport factor P10</fullName>
    </alternativeName>
</protein>
<proteinExistence type="evidence at protein level"/>
<dbReference type="EMBL" id="U18778">
    <property type="protein sequence ID" value="AAB64542.1"/>
    <property type="molecule type" value="Genomic_DNA"/>
</dbReference>
<dbReference type="EMBL" id="AY558448">
    <property type="protein sequence ID" value="AAS56774.1"/>
    <property type="molecule type" value="Genomic_DNA"/>
</dbReference>
<dbReference type="EMBL" id="L22204">
    <property type="protein sequence ID" value="AAB49379.1"/>
    <property type="molecule type" value="Genomic_DNA"/>
</dbReference>
<dbReference type="EMBL" id="BK006939">
    <property type="protein sequence ID" value="DAA07660.1"/>
    <property type="molecule type" value="Genomic_DNA"/>
</dbReference>
<dbReference type="PIR" id="S50467">
    <property type="entry name" value="S50467"/>
</dbReference>
<dbReference type="RefSeq" id="NP_010925.1">
    <property type="nucleotide sequence ID" value="NM_001178900.1"/>
</dbReference>
<dbReference type="PDB" id="1GY7">
    <property type="method" value="X-ray"/>
    <property type="resolution" value="1.60 A"/>
    <property type="chains" value="A/B/C/D=1-125"/>
</dbReference>
<dbReference type="PDB" id="1GYB">
    <property type="method" value="X-ray"/>
    <property type="resolution" value="1.90 A"/>
    <property type="chains" value="A/B/C/D=1-125"/>
</dbReference>
<dbReference type="PDBsum" id="1GY7"/>
<dbReference type="PDBsum" id="1GYB"/>
<dbReference type="SMR" id="P33331"/>
<dbReference type="BioGRID" id="36740">
    <property type="interactions" value="406"/>
</dbReference>
<dbReference type="DIP" id="DIP-2245N"/>
<dbReference type="FunCoup" id="P33331">
    <property type="interactions" value="1426"/>
</dbReference>
<dbReference type="IntAct" id="P33331">
    <property type="interactions" value="2"/>
</dbReference>
<dbReference type="MINT" id="P33331"/>
<dbReference type="STRING" id="4932.YER009W"/>
<dbReference type="iPTMnet" id="P33331"/>
<dbReference type="PaxDb" id="4932-YER009W"/>
<dbReference type="PeptideAtlas" id="P33331"/>
<dbReference type="TopDownProteomics" id="P33331"/>
<dbReference type="EnsemblFungi" id="YER009W_mRNA">
    <property type="protein sequence ID" value="YER009W"/>
    <property type="gene ID" value="YER009W"/>
</dbReference>
<dbReference type="GeneID" id="856727"/>
<dbReference type="KEGG" id="sce:YER009W"/>
<dbReference type="AGR" id="SGD:S000000811"/>
<dbReference type="SGD" id="S000000811">
    <property type="gene designation" value="NTF2"/>
</dbReference>
<dbReference type="VEuPathDB" id="FungiDB:YER009W"/>
<dbReference type="eggNOG" id="KOG2104">
    <property type="taxonomic scope" value="Eukaryota"/>
</dbReference>
<dbReference type="GeneTree" id="ENSGT00510000047030"/>
<dbReference type="HOGENOM" id="CLU_131642_0_0_1"/>
<dbReference type="InParanoid" id="P33331"/>
<dbReference type="OMA" id="QFVEYYY"/>
<dbReference type="OrthoDB" id="6507044at2759"/>
<dbReference type="BioCyc" id="YEAST:G3O-30196-MONOMER"/>
<dbReference type="BioGRID-ORCS" id="856727">
    <property type="hits" value="4 hits in 10 CRISPR screens"/>
</dbReference>
<dbReference type="ChiTaRS" id="NTF2">
    <property type="organism name" value="yeast"/>
</dbReference>
<dbReference type="EvolutionaryTrace" id="P33331"/>
<dbReference type="PRO" id="PR:P33331"/>
<dbReference type="Proteomes" id="UP000002311">
    <property type="component" value="Chromosome V"/>
</dbReference>
<dbReference type="RNAct" id="P33331">
    <property type="molecule type" value="protein"/>
</dbReference>
<dbReference type="GO" id="GO:0005737">
    <property type="term" value="C:cytoplasm"/>
    <property type="evidence" value="ECO:0007669"/>
    <property type="project" value="UniProtKB-SubCell"/>
</dbReference>
<dbReference type="GO" id="GO:0005635">
    <property type="term" value="C:nuclear envelope"/>
    <property type="evidence" value="ECO:0000314"/>
    <property type="project" value="SGD"/>
</dbReference>
<dbReference type="GO" id="GO:0044613">
    <property type="term" value="C:nuclear pore central transport channel"/>
    <property type="evidence" value="ECO:0000318"/>
    <property type="project" value="GO_Central"/>
</dbReference>
<dbReference type="GO" id="GO:0061608">
    <property type="term" value="F:nuclear import signal receptor activity"/>
    <property type="evidence" value="ECO:0000318"/>
    <property type="project" value="GO_Central"/>
</dbReference>
<dbReference type="GO" id="GO:0031267">
    <property type="term" value="F:small GTPase binding"/>
    <property type="evidence" value="ECO:0000314"/>
    <property type="project" value="SGD"/>
</dbReference>
<dbReference type="GO" id="GO:0006913">
    <property type="term" value="P:nucleocytoplasmic transport"/>
    <property type="evidence" value="ECO:0000315"/>
    <property type="project" value="SGD"/>
</dbReference>
<dbReference type="GO" id="GO:0006606">
    <property type="term" value="P:protein import into nucleus"/>
    <property type="evidence" value="ECO:0000315"/>
    <property type="project" value="SGD"/>
</dbReference>
<dbReference type="CDD" id="cd00780">
    <property type="entry name" value="NTF2"/>
    <property type="match status" value="1"/>
</dbReference>
<dbReference type="FunFam" id="3.10.450.50:FF:000005">
    <property type="entry name" value="Nuclear transport factor 2"/>
    <property type="match status" value="1"/>
</dbReference>
<dbReference type="Gene3D" id="3.10.450.50">
    <property type="match status" value="1"/>
</dbReference>
<dbReference type="InterPro" id="IPR045875">
    <property type="entry name" value="NTF2"/>
</dbReference>
<dbReference type="InterPro" id="IPR032710">
    <property type="entry name" value="NTF2-like_dom_sf"/>
</dbReference>
<dbReference type="InterPro" id="IPR002075">
    <property type="entry name" value="NTF2_dom"/>
</dbReference>
<dbReference type="InterPro" id="IPR018222">
    <property type="entry name" value="Nuclear_transport_factor_2_euk"/>
</dbReference>
<dbReference type="PANTHER" id="PTHR12612">
    <property type="entry name" value="NUCLEAR TRANSPORT FACTOR 2"/>
    <property type="match status" value="1"/>
</dbReference>
<dbReference type="Pfam" id="PF02136">
    <property type="entry name" value="NTF2"/>
    <property type="match status" value="1"/>
</dbReference>
<dbReference type="SUPFAM" id="SSF54427">
    <property type="entry name" value="NTF2-like"/>
    <property type="match status" value="1"/>
</dbReference>
<dbReference type="PROSITE" id="PS50177">
    <property type="entry name" value="NTF2_DOMAIN"/>
    <property type="match status" value="1"/>
</dbReference>
<organism>
    <name type="scientific">Saccharomyces cerevisiae (strain ATCC 204508 / S288c)</name>
    <name type="common">Baker's yeast</name>
    <dbReference type="NCBI Taxonomy" id="559292"/>
    <lineage>
        <taxon>Eukaryota</taxon>
        <taxon>Fungi</taxon>
        <taxon>Dikarya</taxon>
        <taxon>Ascomycota</taxon>
        <taxon>Saccharomycotina</taxon>
        <taxon>Saccharomycetes</taxon>
        <taxon>Saccharomycetales</taxon>
        <taxon>Saccharomycetaceae</taxon>
        <taxon>Saccharomyces</taxon>
    </lineage>
</organism>
<evidence type="ECO:0000255" key="1">
    <source>
        <dbReference type="PROSITE-ProRule" id="PRU00137"/>
    </source>
</evidence>
<evidence type="ECO:0000269" key="2">
    <source>
    </source>
</evidence>
<evidence type="ECO:0000269" key="3">
    <source>
    </source>
</evidence>
<evidence type="ECO:0007744" key="4">
    <source>
    </source>
</evidence>
<evidence type="ECO:0007744" key="5">
    <source>
    </source>
</evidence>
<evidence type="ECO:0007829" key="6">
    <source>
        <dbReference type="PDB" id="1GY7"/>
    </source>
</evidence>
<reference key="1">
    <citation type="journal article" date="1997" name="Nature">
        <title>The nucleotide sequence of Saccharomyces cerevisiae chromosome V.</title>
        <authorList>
            <person name="Dietrich F.S."/>
            <person name="Mulligan J.T."/>
            <person name="Hennessy K.M."/>
            <person name="Yelton M.A."/>
            <person name="Allen E."/>
            <person name="Araujo R."/>
            <person name="Aviles E."/>
            <person name="Berno A."/>
            <person name="Brennan T."/>
            <person name="Carpenter J."/>
            <person name="Chen E."/>
            <person name="Cherry J.M."/>
            <person name="Chung E."/>
            <person name="Duncan M."/>
            <person name="Guzman E."/>
            <person name="Hartzell G."/>
            <person name="Hunicke-Smith S."/>
            <person name="Hyman R.W."/>
            <person name="Kayser A."/>
            <person name="Komp C."/>
            <person name="Lashkari D."/>
            <person name="Lew H."/>
            <person name="Lin D."/>
            <person name="Mosedale D."/>
            <person name="Nakahara K."/>
            <person name="Namath A."/>
            <person name="Norgren R."/>
            <person name="Oefner P."/>
            <person name="Oh C."/>
            <person name="Petel F.X."/>
            <person name="Roberts D."/>
            <person name="Sehl P."/>
            <person name="Schramm S."/>
            <person name="Shogren T."/>
            <person name="Smith V."/>
            <person name="Taylor P."/>
            <person name="Wei Y."/>
            <person name="Botstein D."/>
            <person name="Davis R.W."/>
        </authorList>
    </citation>
    <scope>NUCLEOTIDE SEQUENCE [LARGE SCALE GENOMIC DNA]</scope>
    <source>
        <strain>ATCC 204508 / S288c</strain>
    </source>
</reference>
<reference key="2">
    <citation type="journal article" date="2014" name="G3 (Bethesda)">
        <title>The reference genome sequence of Saccharomyces cerevisiae: Then and now.</title>
        <authorList>
            <person name="Engel S.R."/>
            <person name="Dietrich F.S."/>
            <person name="Fisk D.G."/>
            <person name="Binkley G."/>
            <person name="Balakrishnan R."/>
            <person name="Costanzo M.C."/>
            <person name="Dwight S.S."/>
            <person name="Hitz B.C."/>
            <person name="Karra K."/>
            <person name="Nash R.S."/>
            <person name="Weng S."/>
            <person name="Wong E.D."/>
            <person name="Lloyd P."/>
            <person name="Skrzypek M.S."/>
            <person name="Miyasato S.R."/>
            <person name="Simison M."/>
            <person name="Cherry J.M."/>
        </authorList>
    </citation>
    <scope>GENOME REANNOTATION</scope>
    <source>
        <strain>ATCC 204508 / S288c</strain>
    </source>
</reference>
<reference key="3">
    <citation type="journal article" date="2007" name="Genome Res.">
        <title>Approaching a complete repository of sequence-verified protein-encoding clones for Saccharomyces cerevisiae.</title>
        <authorList>
            <person name="Hu Y."/>
            <person name="Rolfs A."/>
            <person name="Bhullar B."/>
            <person name="Murthy T.V.S."/>
            <person name="Zhu C."/>
            <person name="Berger M.F."/>
            <person name="Camargo A.A."/>
            <person name="Kelley F."/>
            <person name="McCarron S."/>
            <person name="Jepson D."/>
            <person name="Richardson A."/>
            <person name="Raphael J."/>
            <person name="Moreira D."/>
            <person name="Taycher E."/>
            <person name="Zuo D."/>
            <person name="Mohr S."/>
            <person name="Kane M.F."/>
            <person name="Williamson J."/>
            <person name="Simpson A.J.G."/>
            <person name="Bulyk M.L."/>
            <person name="Harlow E."/>
            <person name="Marsischky G."/>
            <person name="Kolodner R.D."/>
            <person name="LaBaer J."/>
        </authorList>
    </citation>
    <scope>NUCLEOTIDE SEQUENCE [GENOMIC DNA]</scope>
    <source>
        <strain>ATCC 204508 / S288c</strain>
    </source>
</reference>
<reference key="4">
    <citation type="journal article" date="1996" name="Genetics">
        <title>SEC3 mutations are synthetically lethal with profilin mutations and cause defects in diploid-specific bud-site selection.</title>
        <authorList>
            <person name="Haarer B.K."/>
            <person name="Corbett A."/>
            <person name="Kweon Y."/>
            <person name="Petzold A.S."/>
            <person name="Silver P."/>
            <person name="Brown S.S."/>
        </authorList>
    </citation>
    <scope>NUCLEOTIDE SEQUENCE [GENOMIC DNA] OF 1-84</scope>
</reference>
<reference key="5">
    <citation type="journal article" date="1996" name="Science">
        <title>Role of the nuclear transport factor p10 in nuclear import.</title>
        <authorList>
            <person name="Nehrbass U."/>
            <person name="Blobel G."/>
        </authorList>
    </citation>
    <scope>CHARACTERIZATION</scope>
    <scope>FUNCTION</scope>
</reference>
<reference key="6">
    <citation type="journal article" date="2012" name="Proc. Natl. Acad. Sci. U.S.A.">
        <title>N-terminal acetylome analyses and functional insights of the N-terminal acetyltransferase NatB.</title>
        <authorList>
            <person name="Van Damme P."/>
            <person name="Lasa M."/>
            <person name="Polevoda B."/>
            <person name="Gazquez C."/>
            <person name="Elosegui-Artola A."/>
            <person name="Kim D.S."/>
            <person name="De Juan-Pardo E."/>
            <person name="Demeyer K."/>
            <person name="Hole K."/>
            <person name="Larrea E."/>
            <person name="Timmerman E."/>
            <person name="Prieto J."/>
            <person name="Arnesen T."/>
            <person name="Sherman F."/>
            <person name="Gevaert K."/>
            <person name="Aldabe R."/>
        </authorList>
    </citation>
    <scope>ACETYLATION [LARGE SCALE ANALYSIS] AT SER-2</scope>
    <scope>CLEAVAGE OF INITIATOR METHIONINE [LARGE SCALE ANALYSIS]</scope>
    <scope>IDENTIFICATION BY MASS SPECTROMETRY [LARGE SCALE ANALYSIS]</scope>
</reference>
<reference key="7">
    <citation type="journal article" date="2012" name="Proteomics">
        <title>Sites of ubiquitin attachment in Saccharomyces cerevisiae.</title>
        <authorList>
            <person name="Starita L.M."/>
            <person name="Lo R.S."/>
            <person name="Eng J.K."/>
            <person name="von Haller P.D."/>
            <person name="Fields S."/>
        </authorList>
    </citation>
    <scope>UBIQUITINATION [LARGE SCALE ANALYSIS] AT LYS-53</scope>
    <scope>IDENTIFICATION BY MASS SPECTROMETRY [LARGE SCALE ANALYSIS]</scope>
</reference>
<reference key="8">
    <citation type="journal article" date="2002" name="EMBO J.">
        <title>Structural basis for the interaction between NTF2 and nucleoporin FxFG repeats.</title>
        <authorList>
            <person name="Bayliss R."/>
            <person name="Leung S.W."/>
            <person name="Baker R.P."/>
            <person name="Quimby B.B."/>
            <person name="Corbett A.H."/>
            <person name="Stewart M."/>
        </authorList>
    </citation>
    <scope>X-RAY CRYSTALLOGRAPHY (1.6 ANGSTROMS)</scope>
    <scope>SUBCELLULAR LOCATION</scope>
</reference>
<keyword id="KW-0002">3D-structure</keyword>
<keyword id="KW-0007">Acetylation</keyword>
<keyword id="KW-0963">Cytoplasm</keyword>
<keyword id="KW-1017">Isopeptide bond</keyword>
<keyword id="KW-0653">Protein transport</keyword>
<keyword id="KW-1185">Reference proteome</keyword>
<keyword id="KW-0813">Transport</keyword>
<keyword id="KW-0832">Ubl conjugation</keyword>
<name>NTF2_YEAST</name>
<feature type="initiator methionine" description="Removed" evidence="5">
    <location>
        <position position="1"/>
    </location>
</feature>
<feature type="chain" id="PRO_0000194792" description="Nuclear transport factor 2">
    <location>
        <begin position="2"/>
        <end position="125"/>
    </location>
</feature>
<feature type="domain" description="NTF2" evidence="1">
    <location>
        <begin position="8"/>
        <end position="121"/>
    </location>
</feature>
<feature type="modified residue" description="N-acetylserine" evidence="5">
    <location>
        <position position="2"/>
    </location>
</feature>
<feature type="cross-link" description="Glycyl lysine isopeptide (Lys-Gly) (interchain with G-Cter in ubiquitin)" evidence="4">
    <location>
        <position position="53"/>
    </location>
</feature>
<feature type="helix" evidence="6">
    <location>
        <begin position="5"/>
        <end position="23"/>
    </location>
</feature>
<feature type="helix" evidence="6">
    <location>
        <begin position="24"/>
        <end position="30"/>
    </location>
</feature>
<feature type="strand" evidence="6">
    <location>
        <begin position="31"/>
        <end position="39"/>
    </location>
</feature>
<feature type="strand" evidence="6">
    <location>
        <begin position="42"/>
        <end position="46"/>
    </location>
</feature>
<feature type="helix" evidence="6">
    <location>
        <begin position="47"/>
        <end position="56"/>
    </location>
</feature>
<feature type="strand" evidence="6">
    <location>
        <begin position="62"/>
        <end position="75"/>
    </location>
</feature>
<feature type="strand" evidence="6">
    <location>
        <begin position="80"/>
        <end position="90"/>
    </location>
</feature>
<feature type="strand" evidence="6">
    <location>
        <begin position="97"/>
        <end position="108"/>
    </location>
</feature>
<feature type="strand" evidence="6">
    <location>
        <begin position="111"/>
        <end position="122"/>
    </location>
</feature>
<accession>P33331</accession>
<accession>D3DLQ6</accession>